<gene>
    <name evidence="1" type="primary">thiC</name>
    <name type="ordered locus">Sala_2370</name>
</gene>
<evidence type="ECO:0000255" key="1">
    <source>
        <dbReference type="HAMAP-Rule" id="MF_00089"/>
    </source>
</evidence>
<evidence type="ECO:0000256" key="2">
    <source>
        <dbReference type="SAM" id="MobiDB-lite"/>
    </source>
</evidence>
<accession>Q1GQJ3</accession>
<protein>
    <recommendedName>
        <fullName evidence="1">Phosphomethylpyrimidine synthase</fullName>
        <ecNumber evidence="1">4.1.99.17</ecNumber>
    </recommendedName>
    <alternativeName>
        <fullName evidence="1">Hydroxymethylpyrimidine phosphate synthase</fullName>
        <shortName evidence="1">HMP-P synthase</shortName>
        <shortName evidence="1">HMP-phosphate synthase</shortName>
        <shortName evidence="1">HMPP synthase</shortName>
    </alternativeName>
    <alternativeName>
        <fullName evidence="1">Thiamine biosynthesis protein ThiC</fullName>
    </alternativeName>
</protein>
<keyword id="KW-0004">4Fe-4S</keyword>
<keyword id="KW-0408">Iron</keyword>
<keyword id="KW-0411">Iron-sulfur</keyword>
<keyword id="KW-0456">Lyase</keyword>
<keyword id="KW-0479">Metal-binding</keyword>
<keyword id="KW-1185">Reference proteome</keyword>
<keyword id="KW-0949">S-adenosyl-L-methionine</keyword>
<keyword id="KW-0784">Thiamine biosynthesis</keyword>
<keyword id="KW-0862">Zinc</keyword>
<feature type="chain" id="PRO_1000004806" description="Phosphomethylpyrimidine synthase">
    <location>
        <begin position="1"/>
        <end position="630"/>
    </location>
</feature>
<feature type="region of interest" description="Disordered" evidence="2">
    <location>
        <begin position="1"/>
        <end position="22"/>
    </location>
</feature>
<feature type="region of interest" description="Disordered" evidence="2">
    <location>
        <begin position="97"/>
        <end position="120"/>
    </location>
</feature>
<feature type="binding site" evidence="1">
    <location>
        <position position="224"/>
    </location>
    <ligand>
        <name>substrate</name>
    </ligand>
</feature>
<feature type="binding site" evidence="1">
    <location>
        <position position="253"/>
    </location>
    <ligand>
        <name>substrate</name>
    </ligand>
</feature>
<feature type="binding site" evidence="1">
    <location>
        <position position="282"/>
    </location>
    <ligand>
        <name>substrate</name>
    </ligand>
</feature>
<feature type="binding site" evidence="1">
    <location>
        <position position="318"/>
    </location>
    <ligand>
        <name>substrate</name>
    </ligand>
</feature>
<feature type="binding site" evidence="1">
    <location>
        <begin position="338"/>
        <end position="340"/>
    </location>
    <ligand>
        <name>substrate</name>
    </ligand>
</feature>
<feature type="binding site" evidence="1">
    <location>
        <begin position="379"/>
        <end position="382"/>
    </location>
    <ligand>
        <name>substrate</name>
    </ligand>
</feature>
<feature type="binding site" evidence="1">
    <location>
        <position position="418"/>
    </location>
    <ligand>
        <name>substrate</name>
    </ligand>
</feature>
<feature type="binding site" evidence="1">
    <location>
        <position position="422"/>
    </location>
    <ligand>
        <name>Zn(2+)</name>
        <dbReference type="ChEBI" id="CHEBI:29105"/>
    </ligand>
</feature>
<feature type="binding site" evidence="1">
    <location>
        <position position="445"/>
    </location>
    <ligand>
        <name>substrate</name>
    </ligand>
</feature>
<feature type="binding site" evidence="1">
    <location>
        <position position="486"/>
    </location>
    <ligand>
        <name>Zn(2+)</name>
        <dbReference type="ChEBI" id="CHEBI:29105"/>
    </ligand>
</feature>
<feature type="binding site" evidence="1">
    <location>
        <position position="566"/>
    </location>
    <ligand>
        <name>[4Fe-4S] cluster</name>
        <dbReference type="ChEBI" id="CHEBI:49883"/>
        <note>4Fe-4S-S-AdoMet</note>
    </ligand>
</feature>
<feature type="binding site" evidence="1">
    <location>
        <position position="569"/>
    </location>
    <ligand>
        <name>[4Fe-4S] cluster</name>
        <dbReference type="ChEBI" id="CHEBI:49883"/>
        <note>4Fe-4S-S-AdoMet</note>
    </ligand>
</feature>
<feature type="binding site" evidence="1">
    <location>
        <position position="574"/>
    </location>
    <ligand>
        <name>[4Fe-4S] cluster</name>
        <dbReference type="ChEBI" id="CHEBI:49883"/>
        <note>4Fe-4S-S-AdoMet</note>
    </ligand>
</feature>
<dbReference type="EC" id="4.1.99.17" evidence="1"/>
<dbReference type="EMBL" id="CP000356">
    <property type="protein sequence ID" value="ABF54079.1"/>
    <property type="molecule type" value="Genomic_DNA"/>
</dbReference>
<dbReference type="RefSeq" id="WP_011542654.1">
    <property type="nucleotide sequence ID" value="NC_008048.1"/>
</dbReference>
<dbReference type="SMR" id="Q1GQJ3"/>
<dbReference type="STRING" id="317655.Sala_2370"/>
<dbReference type="KEGG" id="sal:Sala_2370"/>
<dbReference type="eggNOG" id="COG0422">
    <property type="taxonomic scope" value="Bacteria"/>
</dbReference>
<dbReference type="HOGENOM" id="CLU_013181_2_1_5"/>
<dbReference type="OrthoDB" id="9805897at2"/>
<dbReference type="UniPathway" id="UPA00060"/>
<dbReference type="Proteomes" id="UP000006578">
    <property type="component" value="Chromosome"/>
</dbReference>
<dbReference type="GO" id="GO:0005829">
    <property type="term" value="C:cytosol"/>
    <property type="evidence" value="ECO:0007669"/>
    <property type="project" value="TreeGrafter"/>
</dbReference>
<dbReference type="GO" id="GO:0051539">
    <property type="term" value="F:4 iron, 4 sulfur cluster binding"/>
    <property type="evidence" value="ECO:0007669"/>
    <property type="project" value="UniProtKB-KW"/>
</dbReference>
<dbReference type="GO" id="GO:0016830">
    <property type="term" value="F:carbon-carbon lyase activity"/>
    <property type="evidence" value="ECO:0007669"/>
    <property type="project" value="InterPro"/>
</dbReference>
<dbReference type="GO" id="GO:0008270">
    <property type="term" value="F:zinc ion binding"/>
    <property type="evidence" value="ECO:0007669"/>
    <property type="project" value="UniProtKB-UniRule"/>
</dbReference>
<dbReference type="GO" id="GO:0009228">
    <property type="term" value="P:thiamine biosynthetic process"/>
    <property type="evidence" value="ECO:0007669"/>
    <property type="project" value="UniProtKB-KW"/>
</dbReference>
<dbReference type="GO" id="GO:0009229">
    <property type="term" value="P:thiamine diphosphate biosynthetic process"/>
    <property type="evidence" value="ECO:0007669"/>
    <property type="project" value="UniProtKB-UniRule"/>
</dbReference>
<dbReference type="FunFam" id="3.20.20.540:FF:000001">
    <property type="entry name" value="Phosphomethylpyrimidine synthase"/>
    <property type="match status" value="1"/>
</dbReference>
<dbReference type="Gene3D" id="6.10.250.620">
    <property type="match status" value="1"/>
</dbReference>
<dbReference type="Gene3D" id="3.20.20.540">
    <property type="entry name" value="Radical SAM ThiC family, central domain"/>
    <property type="match status" value="1"/>
</dbReference>
<dbReference type="HAMAP" id="MF_00089">
    <property type="entry name" value="ThiC"/>
    <property type="match status" value="1"/>
</dbReference>
<dbReference type="InterPro" id="IPR037509">
    <property type="entry name" value="ThiC"/>
</dbReference>
<dbReference type="InterPro" id="IPR025747">
    <property type="entry name" value="ThiC-associated_dom"/>
</dbReference>
<dbReference type="InterPro" id="IPR038521">
    <property type="entry name" value="ThiC/Bza_core_dom"/>
</dbReference>
<dbReference type="InterPro" id="IPR002817">
    <property type="entry name" value="ThiC/BzaA/B"/>
</dbReference>
<dbReference type="NCBIfam" id="NF006763">
    <property type="entry name" value="PRK09284.1"/>
    <property type="match status" value="1"/>
</dbReference>
<dbReference type="NCBIfam" id="NF009895">
    <property type="entry name" value="PRK13352.1"/>
    <property type="match status" value="1"/>
</dbReference>
<dbReference type="NCBIfam" id="TIGR00190">
    <property type="entry name" value="thiC"/>
    <property type="match status" value="1"/>
</dbReference>
<dbReference type="PANTHER" id="PTHR30557:SF1">
    <property type="entry name" value="PHOSPHOMETHYLPYRIMIDINE SYNTHASE, CHLOROPLASTIC"/>
    <property type="match status" value="1"/>
</dbReference>
<dbReference type="PANTHER" id="PTHR30557">
    <property type="entry name" value="THIAMINE BIOSYNTHESIS PROTEIN THIC"/>
    <property type="match status" value="1"/>
</dbReference>
<dbReference type="Pfam" id="PF13667">
    <property type="entry name" value="ThiC-associated"/>
    <property type="match status" value="1"/>
</dbReference>
<dbReference type="Pfam" id="PF01964">
    <property type="entry name" value="ThiC_Rad_SAM"/>
    <property type="match status" value="1"/>
</dbReference>
<dbReference type="SFLD" id="SFLDF00407">
    <property type="entry name" value="phosphomethylpyrimidine_syntha"/>
    <property type="match status" value="1"/>
</dbReference>
<dbReference type="SFLD" id="SFLDG01114">
    <property type="entry name" value="phosphomethylpyrimidine_syntha"/>
    <property type="match status" value="1"/>
</dbReference>
<dbReference type="SFLD" id="SFLDS00113">
    <property type="entry name" value="Radical_SAM_Phosphomethylpyrim"/>
    <property type="match status" value="1"/>
</dbReference>
<proteinExistence type="inferred from homology"/>
<comment type="function">
    <text evidence="1">Catalyzes the synthesis of the hydroxymethylpyrimidine phosphate (HMP-P) moiety of thiamine from aminoimidazole ribotide (AIR) in a radical S-adenosyl-L-methionine (SAM)-dependent reaction.</text>
</comment>
<comment type="catalytic activity">
    <reaction evidence="1">
        <text>5-amino-1-(5-phospho-beta-D-ribosyl)imidazole + S-adenosyl-L-methionine = 4-amino-2-methyl-5-(phosphooxymethyl)pyrimidine + CO + 5'-deoxyadenosine + formate + L-methionine + 3 H(+)</text>
        <dbReference type="Rhea" id="RHEA:24840"/>
        <dbReference type="ChEBI" id="CHEBI:15378"/>
        <dbReference type="ChEBI" id="CHEBI:15740"/>
        <dbReference type="ChEBI" id="CHEBI:17245"/>
        <dbReference type="ChEBI" id="CHEBI:17319"/>
        <dbReference type="ChEBI" id="CHEBI:57844"/>
        <dbReference type="ChEBI" id="CHEBI:58354"/>
        <dbReference type="ChEBI" id="CHEBI:59789"/>
        <dbReference type="ChEBI" id="CHEBI:137981"/>
        <dbReference type="EC" id="4.1.99.17"/>
    </reaction>
</comment>
<comment type="cofactor">
    <cofactor evidence="1">
        <name>[4Fe-4S] cluster</name>
        <dbReference type="ChEBI" id="CHEBI:49883"/>
    </cofactor>
    <text evidence="1">Binds 1 [4Fe-4S] cluster per subunit. The cluster is coordinated with 3 cysteines and an exchangeable S-adenosyl-L-methionine.</text>
</comment>
<comment type="pathway">
    <text evidence="1">Cofactor biosynthesis; thiamine diphosphate biosynthesis.</text>
</comment>
<comment type="subunit">
    <text evidence="1">Homodimer.</text>
</comment>
<comment type="similarity">
    <text evidence="1">Belongs to the ThiC family.</text>
</comment>
<sequence length="630" mass="69436">MADIDSRLDTTQATPIGVTTGPIRGSRKIHVASPTGSGIRVAMREILLEPSSGEPPVRVYDTSGPYTDPDATIDIAQGLPELRASWIRARGDVEEVAQREVRPEDNGQLGPDRSGGVPAFPNVRKKVLRAKPGANVSQMHYARRGIITPEMEYVATRENLGRERLAEYVRDGQDWGASIPDYVTPEFVRDEVARGRAIIPSNINHPESEPMAIGRNFLVKINANIGNSAVASDVAAEVDKMVWSIRWGADTVMDLSTGRNIHDTREWILRNSPVPIGTVPIYQALEKVGGIAEELTWEIFRDTLIEQAEQGVDYFTIHAGVRLPYVPLAAKRVTGIVSRGGSIMAKWCLAHHRESFLYDHFDEITEIMKAYDIAYSLGDGLRPGSIADANDEAQFAELYTLGELTRRAWAQDVQVMIEGPGHVPMHKIKENMDKQLEACGEAPFYTLGPLTTDIAPGYDHITSGIGAAMIGWYGTAMLCYVTPKEHLGLPDRDDVKVGVVTYKLAAHAADLAKGHPAAQVRDDALSKARFEFRWRDQFNLSLDPDTAEQYHDQTLPAEGAKTAHFCSMCGPKFCSMKISQEVREFAKLQNQDSAGFIAAEEAEKGMAEMSQVYEDTGRELYMGAGGREHD</sequence>
<name>THIC_SPHAL</name>
<reference key="1">
    <citation type="journal article" date="2009" name="Proc. Natl. Acad. Sci. U.S.A.">
        <title>The genomic basis of trophic strategy in marine bacteria.</title>
        <authorList>
            <person name="Lauro F.M."/>
            <person name="McDougald D."/>
            <person name="Thomas T."/>
            <person name="Williams T.J."/>
            <person name="Egan S."/>
            <person name="Rice S."/>
            <person name="DeMaere M.Z."/>
            <person name="Ting L."/>
            <person name="Ertan H."/>
            <person name="Johnson J."/>
            <person name="Ferriera S."/>
            <person name="Lapidus A."/>
            <person name="Anderson I."/>
            <person name="Kyrpides N."/>
            <person name="Munk A.C."/>
            <person name="Detter C."/>
            <person name="Han C.S."/>
            <person name="Brown M.V."/>
            <person name="Robb F.T."/>
            <person name="Kjelleberg S."/>
            <person name="Cavicchioli R."/>
        </authorList>
    </citation>
    <scope>NUCLEOTIDE SEQUENCE [LARGE SCALE GENOMIC DNA]</scope>
    <source>
        <strain>DSM 13593 / LMG 18877 / RB2256</strain>
    </source>
</reference>
<organism>
    <name type="scientific">Sphingopyxis alaskensis (strain DSM 13593 / LMG 18877 / RB2256)</name>
    <name type="common">Sphingomonas alaskensis</name>
    <dbReference type="NCBI Taxonomy" id="317655"/>
    <lineage>
        <taxon>Bacteria</taxon>
        <taxon>Pseudomonadati</taxon>
        <taxon>Pseudomonadota</taxon>
        <taxon>Alphaproteobacteria</taxon>
        <taxon>Sphingomonadales</taxon>
        <taxon>Sphingomonadaceae</taxon>
        <taxon>Sphingopyxis</taxon>
    </lineage>
</organism>